<proteinExistence type="inferred from homology"/>
<gene>
    <name evidence="1" type="primary">prfA</name>
    <name type="ordered locus">FTW_0259</name>
</gene>
<comment type="function">
    <text evidence="1">Peptide chain release factor 1 directs the termination of translation in response to the peptide chain termination codons UAG and UAA.</text>
</comment>
<comment type="subcellular location">
    <subcellularLocation>
        <location evidence="1">Cytoplasm</location>
    </subcellularLocation>
</comment>
<comment type="PTM">
    <text evidence="1">Methylated by PrmC. Methylation increases the termination efficiency of RF1.</text>
</comment>
<comment type="similarity">
    <text evidence="1">Belongs to the prokaryotic/mitochondrial release factor family.</text>
</comment>
<organism>
    <name type="scientific">Francisella tularensis subsp. tularensis (strain WY96-3418)</name>
    <dbReference type="NCBI Taxonomy" id="418136"/>
    <lineage>
        <taxon>Bacteria</taxon>
        <taxon>Pseudomonadati</taxon>
        <taxon>Pseudomonadota</taxon>
        <taxon>Gammaproteobacteria</taxon>
        <taxon>Thiotrichales</taxon>
        <taxon>Francisellaceae</taxon>
        <taxon>Francisella</taxon>
    </lineage>
</organism>
<keyword id="KW-0963">Cytoplasm</keyword>
<keyword id="KW-0488">Methylation</keyword>
<keyword id="KW-0648">Protein biosynthesis</keyword>
<accession>A4IWC1</accession>
<sequence>MKDSIKAKLQSLIERHEEVSALLSEAGIISDQNKFRDLSKEYSHLEPIVKAFKEYTQALEDKQAAYEMLNEKDAELVEMAKEELKLANEAIEKLESELQIFLLPRDPNDDANVFLEIRAGTGGDEASIFSGDLFKMYSKYAEQRGWKIEVISASEGEHGGYKEIISRIYGDGVYSQLKFESGAHRVQRVPATESQGRIHTSACTVAVMPEADEVEGIDINPADIKVDTFRASGAGGQHVNKTDSAIRITHIPTGVVVECQDQRSQHKNRAAAMSMLKSKLLQAEIDKQQKEQSDTRKSLVGSGDRSERIRTYNYPQGRVTDHRINLTLYKLDEVMEGSLDSIIQPLVLEHQADLLATMSDE</sequence>
<reference key="1">
    <citation type="journal article" date="2007" name="PLoS ONE">
        <title>Complete genomic characterization of a pathogenic A.II strain of Francisella tularensis subspecies tularensis.</title>
        <authorList>
            <person name="Beckstrom-Sternberg S.M."/>
            <person name="Auerbach R.K."/>
            <person name="Godbole S."/>
            <person name="Pearson J.V."/>
            <person name="Beckstrom-Sternberg J.S."/>
            <person name="Deng Z."/>
            <person name="Munk C."/>
            <person name="Kubota K."/>
            <person name="Zhou Y."/>
            <person name="Bruce D."/>
            <person name="Noronha J."/>
            <person name="Scheuermann R.H."/>
            <person name="Wang A."/>
            <person name="Wei X."/>
            <person name="Wang J."/>
            <person name="Hao J."/>
            <person name="Wagner D.M."/>
            <person name="Brettin T.S."/>
            <person name="Brown N."/>
            <person name="Gilna P."/>
            <person name="Keim P.S."/>
        </authorList>
    </citation>
    <scope>NUCLEOTIDE SEQUENCE [LARGE SCALE GENOMIC DNA]</scope>
    <source>
        <strain>WY96-3418</strain>
    </source>
</reference>
<protein>
    <recommendedName>
        <fullName evidence="1">Peptide chain release factor 1</fullName>
        <shortName evidence="1">RF-1</shortName>
    </recommendedName>
</protein>
<evidence type="ECO:0000255" key="1">
    <source>
        <dbReference type="HAMAP-Rule" id="MF_00093"/>
    </source>
</evidence>
<evidence type="ECO:0000256" key="2">
    <source>
        <dbReference type="SAM" id="MobiDB-lite"/>
    </source>
</evidence>
<name>RF1_FRATW</name>
<dbReference type="EMBL" id="CP000608">
    <property type="protein sequence ID" value="ABO46223.1"/>
    <property type="molecule type" value="Genomic_DNA"/>
</dbReference>
<dbReference type="RefSeq" id="WP_003017177.1">
    <property type="nucleotide sequence ID" value="NC_009257.1"/>
</dbReference>
<dbReference type="SMR" id="A4IWC1"/>
<dbReference type="KEGG" id="ftw:FTW_0259"/>
<dbReference type="HOGENOM" id="CLU_036856_0_1_6"/>
<dbReference type="GO" id="GO:0005737">
    <property type="term" value="C:cytoplasm"/>
    <property type="evidence" value="ECO:0007669"/>
    <property type="project" value="UniProtKB-SubCell"/>
</dbReference>
<dbReference type="GO" id="GO:0016149">
    <property type="term" value="F:translation release factor activity, codon specific"/>
    <property type="evidence" value="ECO:0007669"/>
    <property type="project" value="UniProtKB-UniRule"/>
</dbReference>
<dbReference type="FunFam" id="3.30.160.20:FF:000004">
    <property type="entry name" value="Peptide chain release factor 1"/>
    <property type="match status" value="1"/>
</dbReference>
<dbReference type="FunFam" id="3.30.70.1660:FF:000002">
    <property type="entry name" value="Peptide chain release factor 1"/>
    <property type="match status" value="1"/>
</dbReference>
<dbReference type="FunFam" id="3.30.70.1660:FF:000004">
    <property type="entry name" value="Peptide chain release factor 1"/>
    <property type="match status" value="1"/>
</dbReference>
<dbReference type="Gene3D" id="3.30.160.20">
    <property type="match status" value="1"/>
</dbReference>
<dbReference type="Gene3D" id="3.30.70.1660">
    <property type="match status" value="2"/>
</dbReference>
<dbReference type="Gene3D" id="6.10.140.1950">
    <property type="match status" value="1"/>
</dbReference>
<dbReference type="HAMAP" id="MF_00093">
    <property type="entry name" value="Rel_fac_1"/>
    <property type="match status" value="1"/>
</dbReference>
<dbReference type="InterPro" id="IPR005139">
    <property type="entry name" value="PCRF"/>
</dbReference>
<dbReference type="InterPro" id="IPR000352">
    <property type="entry name" value="Pep_chain_release_fac_I"/>
</dbReference>
<dbReference type="InterPro" id="IPR045853">
    <property type="entry name" value="Pep_chain_release_fac_I_sf"/>
</dbReference>
<dbReference type="InterPro" id="IPR050057">
    <property type="entry name" value="Prokaryotic/Mito_RF"/>
</dbReference>
<dbReference type="InterPro" id="IPR004373">
    <property type="entry name" value="RF-1"/>
</dbReference>
<dbReference type="NCBIfam" id="TIGR00019">
    <property type="entry name" value="prfA"/>
    <property type="match status" value="1"/>
</dbReference>
<dbReference type="NCBIfam" id="NF001859">
    <property type="entry name" value="PRK00591.1"/>
    <property type="match status" value="1"/>
</dbReference>
<dbReference type="PANTHER" id="PTHR43804">
    <property type="entry name" value="LD18447P"/>
    <property type="match status" value="1"/>
</dbReference>
<dbReference type="PANTHER" id="PTHR43804:SF7">
    <property type="entry name" value="LD18447P"/>
    <property type="match status" value="1"/>
</dbReference>
<dbReference type="Pfam" id="PF03462">
    <property type="entry name" value="PCRF"/>
    <property type="match status" value="1"/>
</dbReference>
<dbReference type="Pfam" id="PF00472">
    <property type="entry name" value="RF-1"/>
    <property type="match status" value="1"/>
</dbReference>
<dbReference type="SMART" id="SM00937">
    <property type="entry name" value="PCRF"/>
    <property type="match status" value="1"/>
</dbReference>
<dbReference type="SUPFAM" id="SSF75620">
    <property type="entry name" value="Release factor"/>
    <property type="match status" value="1"/>
</dbReference>
<dbReference type="PROSITE" id="PS00745">
    <property type="entry name" value="RF_PROK_I"/>
    <property type="match status" value="1"/>
</dbReference>
<feature type="chain" id="PRO_1000004893" description="Peptide chain release factor 1">
    <location>
        <begin position="1"/>
        <end position="361"/>
    </location>
</feature>
<feature type="region of interest" description="Disordered" evidence="2">
    <location>
        <begin position="287"/>
        <end position="313"/>
    </location>
</feature>
<feature type="compositionally biased region" description="Basic and acidic residues" evidence="2">
    <location>
        <begin position="287"/>
        <end position="297"/>
    </location>
</feature>
<feature type="modified residue" description="N5-methylglutamine" evidence="1">
    <location>
        <position position="237"/>
    </location>
</feature>